<accession>P9WKU7</accession>
<accession>L0T6N1</accession>
<accession>Q11158</accession>
<gene>
    <name type="ordered locus">Rv0493c</name>
    <name type="ORF">MTCY20G9.19c</name>
</gene>
<name>Y493_MYCTU</name>
<reference key="1">
    <citation type="journal article" date="1998" name="Nature">
        <title>Deciphering the biology of Mycobacterium tuberculosis from the complete genome sequence.</title>
        <authorList>
            <person name="Cole S.T."/>
            <person name="Brosch R."/>
            <person name="Parkhill J."/>
            <person name="Garnier T."/>
            <person name="Churcher C.M."/>
            <person name="Harris D.E."/>
            <person name="Gordon S.V."/>
            <person name="Eiglmeier K."/>
            <person name="Gas S."/>
            <person name="Barry C.E. III"/>
            <person name="Tekaia F."/>
            <person name="Badcock K."/>
            <person name="Basham D."/>
            <person name="Brown D."/>
            <person name="Chillingworth T."/>
            <person name="Connor R."/>
            <person name="Davies R.M."/>
            <person name="Devlin K."/>
            <person name="Feltwell T."/>
            <person name="Gentles S."/>
            <person name="Hamlin N."/>
            <person name="Holroyd S."/>
            <person name="Hornsby T."/>
            <person name="Jagels K."/>
            <person name="Krogh A."/>
            <person name="McLean J."/>
            <person name="Moule S."/>
            <person name="Murphy L.D."/>
            <person name="Oliver S."/>
            <person name="Osborne J."/>
            <person name="Quail M.A."/>
            <person name="Rajandream M.A."/>
            <person name="Rogers J."/>
            <person name="Rutter S."/>
            <person name="Seeger K."/>
            <person name="Skelton S."/>
            <person name="Squares S."/>
            <person name="Squares R."/>
            <person name="Sulston J.E."/>
            <person name="Taylor K."/>
            <person name="Whitehead S."/>
            <person name="Barrell B.G."/>
        </authorList>
    </citation>
    <scope>NUCLEOTIDE SEQUENCE [LARGE SCALE GENOMIC DNA]</scope>
    <source>
        <strain>ATCC 25618 / H37Rv</strain>
    </source>
</reference>
<reference key="2">
    <citation type="journal article" date="2011" name="Mol. Cell. Proteomics">
        <title>Proteogenomic analysis of Mycobacterium tuberculosis by high resolution mass spectrometry.</title>
        <authorList>
            <person name="Kelkar D.S."/>
            <person name="Kumar D."/>
            <person name="Kumar P."/>
            <person name="Balakrishnan L."/>
            <person name="Muthusamy B."/>
            <person name="Yadav A.K."/>
            <person name="Shrivastava P."/>
            <person name="Marimuthu A."/>
            <person name="Anand S."/>
            <person name="Sundaram H."/>
            <person name="Kingsbury R."/>
            <person name="Harsha H.C."/>
            <person name="Nair B."/>
            <person name="Prasad T.S."/>
            <person name="Chauhan D.S."/>
            <person name="Katoch K."/>
            <person name="Katoch V.M."/>
            <person name="Kumar P."/>
            <person name="Chaerkady R."/>
            <person name="Ramachandran S."/>
            <person name="Dash D."/>
            <person name="Pandey A."/>
        </authorList>
    </citation>
    <scope>IDENTIFICATION BY MASS SPECTROMETRY [LARGE SCALE ANALYSIS]</scope>
    <source>
        <strain>ATCC 25618 / H37Rv</strain>
    </source>
</reference>
<keyword id="KW-1185">Reference proteome</keyword>
<dbReference type="EMBL" id="AL123456">
    <property type="protein sequence ID" value="CCP43228.1"/>
    <property type="molecule type" value="Genomic_DNA"/>
</dbReference>
<dbReference type="PIR" id="H70744">
    <property type="entry name" value="H70744"/>
</dbReference>
<dbReference type="RefSeq" id="NP_215007.1">
    <property type="nucleotide sequence ID" value="NC_000962.3"/>
</dbReference>
<dbReference type="RefSeq" id="WP_003898482.1">
    <property type="nucleotide sequence ID" value="NC_000962.3"/>
</dbReference>
<dbReference type="SMR" id="P9WKU7"/>
<dbReference type="STRING" id="83332.Rv0493c"/>
<dbReference type="PaxDb" id="83332-Rv0493c"/>
<dbReference type="DNASU" id="887200"/>
<dbReference type="GeneID" id="887200"/>
<dbReference type="KEGG" id="mtu:Rv0493c"/>
<dbReference type="KEGG" id="mtv:RVBD_0493c"/>
<dbReference type="PATRIC" id="fig|83332.111.peg.542"/>
<dbReference type="TubercuList" id="Rv0493c"/>
<dbReference type="eggNOG" id="ENOG502Z7ZQ">
    <property type="taxonomic scope" value="Bacteria"/>
</dbReference>
<dbReference type="InParanoid" id="P9WKU7"/>
<dbReference type="OrthoDB" id="4678575at2"/>
<dbReference type="Proteomes" id="UP000001584">
    <property type="component" value="Chromosome"/>
</dbReference>
<feature type="chain" id="PRO_0000103694" description="Uncharacterized protein Rv0493c">
    <location>
        <begin position="1"/>
        <end position="329"/>
    </location>
</feature>
<feature type="region of interest" description="Disordered" evidence="1">
    <location>
        <begin position="1"/>
        <end position="20"/>
    </location>
</feature>
<protein>
    <recommendedName>
        <fullName>Uncharacterized protein Rv0493c</fullName>
    </recommendedName>
</protein>
<sequence length="329" mass="35427">MGESTTQPAGGAAVDDETRSAALPRWRGAAGRLEVWYATLSDPLTRTGLWVHCETVAPTTGGPYAHGWVTWFPPDAPPGTERFGPQPAQPAAGPAWFDIAGVRMAPAELTGRTRSLAWELSWKDTAAPLWTFPRVAWERELLPGAQVVIAPTAVFAGSLAVGETTHRVDSWRGSVAHIYGHGNAKRWGWIHADLGDGDVLEVVTAVSHKPGLRRLAPLAFVRFRIDGKDWPASPLPSLRMRTTLGVRHWQLEGRIGGREALIRVDQPPERCVSLGYTDPDGAKAVCTNTEQADIHIELGGRHWSVLGTGHAEVGLRGTAAPAIKEGTPA</sequence>
<organism>
    <name type="scientific">Mycobacterium tuberculosis (strain ATCC 25618 / H37Rv)</name>
    <dbReference type="NCBI Taxonomy" id="83332"/>
    <lineage>
        <taxon>Bacteria</taxon>
        <taxon>Bacillati</taxon>
        <taxon>Actinomycetota</taxon>
        <taxon>Actinomycetes</taxon>
        <taxon>Mycobacteriales</taxon>
        <taxon>Mycobacteriaceae</taxon>
        <taxon>Mycobacterium</taxon>
        <taxon>Mycobacterium tuberculosis complex</taxon>
    </lineage>
</organism>
<evidence type="ECO:0000256" key="1">
    <source>
        <dbReference type="SAM" id="MobiDB-lite"/>
    </source>
</evidence>
<proteinExistence type="evidence at protein level"/>